<dbReference type="EMBL" id="AE014075">
    <property type="protein sequence ID" value="AAN83432.1"/>
    <property type="molecule type" value="Genomic_DNA"/>
</dbReference>
<dbReference type="RefSeq" id="WP_000973666.1">
    <property type="nucleotide sequence ID" value="NZ_CP051263.1"/>
</dbReference>
<dbReference type="PDB" id="2VDA">
    <property type="method" value="NMR"/>
    <property type="chains" value="B=1-25"/>
</dbReference>
<dbReference type="PDBsum" id="2VDA"/>
<dbReference type="SMR" id="Q8CVI4"/>
<dbReference type="STRING" id="199310.c5006"/>
<dbReference type="KEGG" id="ecc:c5006"/>
<dbReference type="eggNOG" id="COG4580">
    <property type="taxonomic scope" value="Bacteria"/>
</dbReference>
<dbReference type="HOGENOM" id="CLU_032473_4_1_6"/>
<dbReference type="BioCyc" id="ECOL199310:C5006-MONOMER"/>
<dbReference type="EvolutionaryTrace" id="Q8CVI4"/>
<dbReference type="Proteomes" id="UP000001410">
    <property type="component" value="Chromosome"/>
</dbReference>
<dbReference type="GO" id="GO:0009279">
    <property type="term" value="C:cell outer membrane"/>
    <property type="evidence" value="ECO:0007669"/>
    <property type="project" value="UniProtKB-SubCell"/>
</dbReference>
<dbReference type="GO" id="GO:0046930">
    <property type="term" value="C:pore complex"/>
    <property type="evidence" value="ECO:0007669"/>
    <property type="project" value="UniProtKB-KW"/>
</dbReference>
<dbReference type="GO" id="GO:0042958">
    <property type="term" value="F:maltodextrin transmembrane transporter activity"/>
    <property type="evidence" value="ECO:0007669"/>
    <property type="project" value="InterPro"/>
</dbReference>
<dbReference type="GO" id="GO:0015481">
    <property type="term" value="F:maltose transporting porin activity"/>
    <property type="evidence" value="ECO:0007669"/>
    <property type="project" value="InterPro"/>
</dbReference>
<dbReference type="GO" id="GO:0006811">
    <property type="term" value="P:monoatomic ion transport"/>
    <property type="evidence" value="ECO:0007669"/>
    <property type="project" value="UniProtKB-KW"/>
</dbReference>
<dbReference type="CDD" id="cd01346">
    <property type="entry name" value="Maltoporin-like"/>
    <property type="match status" value="1"/>
</dbReference>
<dbReference type="FunFam" id="2.40.170.10:FF:000001">
    <property type="entry name" value="Maltoporin"/>
    <property type="match status" value="1"/>
</dbReference>
<dbReference type="Gene3D" id="2.40.170.10">
    <property type="entry name" value="Porin, LamB type"/>
    <property type="match status" value="1"/>
</dbReference>
<dbReference type="HAMAP" id="MF_01301">
    <property type="entry name" value="LamB"/>
    <property type="match status" value="1"/>
</dbReference>
<dbReference type="InterPro" id="IPR050286">
    <property type="entry name" value="G_neg_Bact_CarbUptk_Porin"/>
</dbReference>
<dbReference type="InterPro" id="IPR023738">
    <property type="entry name" value="Maltoporin"/>
</dbReference>
<dbReference type="InterPro" id="IPR003192">
    <property type="entry name" value="Porin_LamB"/>
</dbReference>
<dbReference type="InterPro" id="IPR036998">
    <property type="entry name" value="Porin_LamB_sf"/>
</dbReference>
<dbReference type="NCBIfam" id="NF006860">
    <property type="entry name" value="PRK09360.1"/>
    <property type="match status" value="1"/>
</dbReference>
<dbReference type="PANTHER" id="PTHR38762">
    <property type="entry name" value="CRYPTIC OUTER MEMBRANE PORIN BGLH-RELATED"/>
    <property type="match status" value="1"/>
</dbReference>
<dbReference type="PANTHER" id="PTHR38762:SF1">
    <property type="entry name" value="CRYPTIC OUTER MEMBRANE PORIN BGLH-RELATED"/>
    <property type="match status" value="1"/>
</dbReference>
<dbReference type="Pfam" id="PF02264">
    <property type="entry name" value="LamB"/>
    <property type="match status" value="1"/>
</dbReference>
<dbReference type="SUPFAM" id="SSF56935">
    <property type="entry name" value="Porins"/>
    <property type="match status" value="1"/>
</dbReference>
<evidence type="ECO:0000250" key="1"/>
<evidence type="ECO:0000255" key="2">
    <source>
        <dbReference type="HAMAP-Rule" id="MF_01301"/>
    </source>
</evidence>
<evidence type="ECO:0007829" key="3">
    <source>
        <dbReference type="PDB" id="2VDA"/>
    </source>
</evidence>
<gene>
    <name evidence="2" type="primary">lamB</name>
    <name type="ordered locus">c5006</name>
</gene>
<comment type="function">
    <text evidence="2">Involved in the transport of maltose and maltodextrins.</text>
</comment>
<comment type="catalytic activity">
    <reaction evidence="2">
        <text>beta-maltose(in) = beta-maltose(out)</text>
        <dbReference type="Rhea" id="RHEA:29731"/>
        <dbReference type="ChEBI" id="CHEBI:18147"/>
    </reaction>
</comment>
<comment type="subunit">
    <text evidence="2">Homotrimer formed of three 18-stranded antiparallel beta-barrels, containing three independent channels.</text>
</comment>
<comment type="subcellular location">
    <subcellularLocation>
        <location evidence="2">Cell outer membrane</location>
        <topology evidence="2">Multi-pass membrane protein</topology>
    </subcellularLocation>
</comment>
<comment type="induction">
    <text evidence="2">By maltose.</text>
</comment>
<comment type="similarity">
    <text evidence="2">Belongs to the porin LamB (TC 1.B.3) family.</text>
</comment>
<proteinExistence type="evidence at protein level"/>
<protein>
    <recommendedName>
        <fullName evidence="2">Maltoporin</fullName>
    </recommendedName>
    <alternativeName>
        <fullName evidence="2">Maltose-inducible porin</fullName>
    </alternativeName>
</protein>
<name>LAMB_ECOL6</name>
<sequence length="446" mass="49941">MMITLRKLPLAVAVAAGVMSAQAMAVDFHGYARSGIGWTGSGGEQQCFQTTGAQSKYRLGNECETYAELKLGQEVWKEGDKSFYFDTNVAYSVAQQNDWEATDPAFREANVQGKNLIEWLPGSTIWAGKRFYQRHDVHMIDFYYWDISGPGAGLENIDVGFGKLSLAATRSSEAGGSSSFASNNIYDYTNETANDVFDVRLAQMEINPGGTLELGVDYGRANLRDNYRLVDGASKDGWLFTAEHTQSVLKGFNKFVVQYATDSMTSQGKGLSQGSGVAFDNEKFAYNINNNGHMLRILDHGAISMGDNWDMMYVGMYQDINWDNDNGTKWWTVGIRPMYKWTPIMSTVMEIGYDNVESQRTGDKNNQYKITLAQQWQAGDSIWSRPAIRVFATYAKWDEKWGYDYTGSSSTNPYYGKAVSADFNGGSFGRGDSDEWTFGAQMEIWW</sequence>
<reference key="1">
    <citation type="journal article" date="2002" name="Proc. Natl. Acad. Sci. U.S.A.">
        <title>Extensive mosaic structure revealed by the complete genome sequence of uropathogenic Escherichia coli.</title>
        <authorList>
            <person name="Welch R.A."/>
            <person name="Burland V."/>
            <person name="Plunkett G. III"/>
            <person name="Redford P."/>
            <person name="Roesch P."/>
            <person name="Rasko D."/>
            <person name="Buckles E.L."/>
            <person name="Liou S.-R."/>
            <person name="Boutin A."/>
            <person name="Hackett J."/>
            <person name="Stroud D."/>
            <person name="Mayhew G.F."/>
            <person name="Rose D.J."/>
            <person name="Zhou S."/>
            <person name="Schwartz D.C."/>
            <person name="Perna N.T."/>
            <person name="Mobley H.L.T."/>
            <person name="Donnenberg M.S."/>
            <person name="Blattner F.R."/>
        </authorList>
    </citation>
    <scope>NUCLEOTIDE SEQUENCE [LARGE SCALE GENOMIC DNA]</scope>
    <source>
        <strain>CFT073 / ATCC 700928 / UPEC</strain>
    </source>
</reference>
<accession>Q8CVI4</accession>
<keyword id="KW-0002">3D-structure</keyword>
<keyword id="KW-0998">Cell outer membrane</keyword>
<keyword id="KW-1015">Disulfide bond</keyword>
<keyword id="KW-0406">Ion transport</keyword>
<keyword id="KW-0472">Membrane</keyword>
<keyword id="KW-0626">Porin</keyword>
<keyword id="KW-1185">Reference proteome</keyword>
<keyword id="KW-0732">Signal</keyword>
<keyword id="KW-0762">Sugar transport</keyword>
<keyword id="KW-0812">Transmembrane</keyword>
<keyword id="KW-1134">Transmembrane beta strand</keyword>
<keyword id="KW-0813">Transport</keyword>
<organism>
    <name type="scientific">Escherichia coli O6:H1 (strain CFT073 / ATCC 700928 / UPEC)</name>
    <dbReference type="NCBI Taxonomy" id="199310"/>
    <lineage>
        <taxon>Bacteria</taxon>
        <taxon>Pseudomonadati</taxon>
        <taxon>Pseudomonadota</taxon>
        <taxon>Gammaproteobacteria</taxon>
        <taxon>Enterobacterales</taxon>
        <taxon>Enterobacteriaceae</taxon>
        <taxon>Escherichia</taxon>
    </lineage>
</organism>
<feature type="signal peptide" evidence="2">
    <location>
        <begin position="1"/>
        <end position="25"/>
    </location>
</feature>
<feature type="chain" id="PRO_0000025176" description="Maltoporin">
    <location>
        <begin position="26"/>
        <end position="446"/>
    </location>
</feature>
<feature type="topological domain" description="Periplasmic" evidence="1">
    <location>
        <position position="26"/>
    </location>
</feature>
<feature type="transmembrane region" description="Beta stranded" evidence="1">
    <location>
        <begin position="27"/>
        <end position="35"/>
    </location>
</feature>
<feature type="topological domain" description="Extracellular" evidence="1">
    <location>
        <begin position="36"/>
        <end position="64"/>
    </location>
</feature>
<feature type="transmembrane region" description="Beta stranded" evidence="1">
    <location>
        <begin position="65"/>
        <end position="78"/>
    </location>
</feature>
<feature type="topological domain" description="Periplasmic" evidence="1">
    <location>
        <begin position="79"/>
        <end position="80"/>
    </location>
</feature>
<feature type="transmembrane region" description="Beta stranded" evidence="1">
    <location>
        <begin position="81"/>
        <end position="93"/>
    </location>
</feature>
<feature type="topological domain" description="Extracellular" evidence="1">
    <location>
        <begin position="94"/>
        <end position="104"/>
    </location>
</feature>
<feature type="transmembrane region" description="Beta stranded" evidence="1">
    <location>
        <begin position="105"/>
        <end position="115"/>
    </location>
</feature>
<feature type="topological domain" description="Periplasmic" evidence="1">
    <location>
        <begin position="116"/>
        <end position="122"/>
    </location>
</feature>
<feature type="transmembrane region" description="Beta stranded" evidence="1">
    <location>
        <begin position="123"/>
        <end position="130"/>
    </location>
</feature>
<feature type="topological domain" description="Extracellular" evidence="1">
    <location>
        <begin position="131"/>
        <end position="148"/>
    </location>
</feature>
<feature type="transmembrane region" description="Beta stranded" evidence="1">
    <location>
        <begin position="149"/>
        <end position="159"/>
    </location>
</feature>
<feature type="topological domain" description="Periplasmic" evidence="1">
    <location>
        <begin position="160"/>
        <end position="161"/>
    </location>
</feature>
<feature type="transmembrane region" description="Beta stranded" evidence="1">
    <location>
        <begin position="162"/>
        <end position="173"/>
    </location>
</feature>
<feature type="topological domain" description="Extracellular" evidence="1">
    <location>
        <begin position="174"/>
        <end position="191"/>
    </location>
</feature>
<feature type="transmembrane region" description="Beta stranded" evidence="1">
    <location>
        <begin position="192"/>
        <end position="205"/>
    </location>
</feature>
<feature type="topological domain" description="Periplasmic" evidence="1">
    <location>
        <begin position="206"/>
        <end position="209"/>
    </location>
</feature>
<feature type="transmembrane region" description="Beta stranded" evidence="1">
    <location>
        <begin position="210"/>
        <end position="222"/>
    </location>
</feature>
<feature type="topological domain" description="Extracellular" evidence="1">
    <location>
        <begin position="223"/>
        <end position="234"/>
    </location>
</feature>
<feature type="transmembrane region" description="Beta stranded" evidence="1">
    <location>
        <begin position="235"/>
        <end position="248"/>
    </location>
</feature>
<feature type="topological domain" description="Periplasmic" evidence="1">
    <location>
        <begin position="249"/>
        <end position="250"/>
    </location>
</feature>
<feature type="transmembrane region" description="Beta stranded" evidence="1">
    <location>
        <begin position="251"/>
        <end position="263"/>
    </location>
</feature>
<feature type="topological domain" description="Extracellular" evidence="1">
    <location>
        <begin position="264"/>
        <end position="290"/>
    </location>
</feature>
<feature type="transmembrane region" description="Beta stranded" evidence="1">
    <location>
        <begin position="291"/>
        <end position="305"/>
    </location>
</feature>
<feature type="topological domain" description="Periplasmic" evidence="1">
    <location>
        <begin position="306"/>
        <end position="307"/>
    </location>
</feature>
<feature type="transmembrane region" description="Beta stranded" evidence="1">
    <location>
        <begin position="308"/>
        <end position="323"/>
    </location>
</feature>
<feature type="topological domain" description="Extracellular" evidence="1">
    <location>
        <begin position="324"/>
        <end position="326"/>
    </location>
</feature>
<feature type="transmembrane region" description="Beta stranded" evidence="1">
    <location>
        <begin position="327"/>
        <end position="341"/>
    </location>
</feature>
<feature type="topological domain" description="Periplasmic" evidence="1">
    <location>
        <begin position="342"/>
        <end position="343"/>
    </location>
</feature>
<feature type="transmembrane region" description="Beta stranded" evidence="1">
    <location>
        <begin position="344"/>
        <end position="359"/>
    </location>
</feature>
<feature type="topological domain" description="Extracellular" evidence="1">
    <location>
        <begin position="360"/>
        <end position="362"/>
    </location>
</feature>
<feature type="transmembrane region" description="Beta stranded" evidence="1">
    <location>
        <begin position="363"/>
        <end position="378"/>
    </location>
</feature>
<feature type="topological domain" description="Periplasmic" evidence="1">
    <location>
        <begin position="379"/>
        <end position="385"/>
    </location>
</feature>
<feature type="transmembrane region" description="Beta stranded" evidence="1">
    <location>
        <begin position="386"/>
        <end position="400"/>
    </location>
</feature>
<feature type="topological domain" description="Extracellular" evidence="1">
    <location>
        <begin position="401"/>
        <end position="430"/>
    </location>
</feature>
<feature type="transmembrane region" description="Beta stranded" evidence="1">
    <location>
        <begin position="431"/>
        <end position="445"/>
    </location>
</feature>
<feature type="topological domain" description="Periplasmic" evidence="1">
    <location>
        <position position="446"/>
    </location>
</feature>
<feature type="site" description="Greasy slide, important in sugar transport" evidence="2">
    <location>
        <position position="31"/>
    </location>
</feature>
<feature type="site" description="Greasy slide, important in sugar transport" evidence="2">
    <location>
        <position position="66"/>
    </location>
</feature>
<feature type="site" description="Greasy slide, important in sugar transport" evidence="2">
    <location>
        <position position="99"/>
    </location>
</feature>
<feature type="site" description="Important in sugar transport" evidence="2">
    <location>
        <position position="143"/>
    </location>
</feature>
<feature type="site" description="Greasy slide, important in sugar transport" evidence="2">
    <location>
        <position position="252"/>
    </location>
</feature>
<feature type="site" description="Greasy slide, important in sugar transport" evidence="2">
    <location>
        <position position="383"/>
    </location>
</feature>
<feature type="site" description="Greasy slide, important in sugar transport" evidence="2">
    <location>
        <position position="445"/>
    </location>
</feature>
<feature type="disulfide bond" evidence="1">
    <location>
        <begin position="47"/>
        <end position="63"/>
    </location>
</feature>
<feature type="helix" evidence="3">
    <location>
        <begin position="10"/>
        <end position="17"/>
    </location>
</feature>